<sequence>MDQTSIQASGGESATASTLKYMPGFGNDFETESLPGALPQGQNSPQKCNYGLYAEQLSGSPFTAPRGTNERSWLYRIRPSVRHTRRFSNASYPLWKTAPCLDEHSLPLGQLRWDPIPAPEERLTFLEGVRTITTAGDAATQVGMSAHAYVFNQDMVDDYFFNADGELLIVPQLGALRVFTEMGIMDVEPLEICLIPRGMMFKILKTGEQAVWRGYICENYGAKFTLPDRGPIGANCLANPRDFKTPVAAFEDKETPCRVHVKWCGKFYVTEIGHSPLDVVAWHGNYAPFKYDLRTFSPVGAIRFDHPDPSIFSVLTAPTEDAGTANVDFVIFPPRWLVAEHTFRPPWYHRNIMSEFMGLIHGQYDAKEEGFVPGGMSLHNMMLPHGPDALAFEKAANAELKPVKLDHTMAFMFETRYPQQLTKYAAELETLQDDYLECWDGLERKFDGTPGIK</sequence>
<keyword id="KW-0223">Dioxygenase</keyword>
<keyword id="KW-0408">Iron</keyword>
<keyword id="KW-0479">Metal-binding</keyword>
<keyword id="KW-0560">Oxidoreductase</keyword>
<keyword id="KW-0585">Phenylalanine catabolism</keyword>
<keyword id="KW-1185">Reference proteome</keyword>
<keyword id="KW-0828">Tyrosine catabolism</keyword>
<accession>B5ZZA8</accession>
<dbReference type="EC" id="1.13.11.5" evidence="1"/>
<dbReference type="EMBL" id="CP001191">
    <property type="protein sequence ID" value="ACI54701.1"/>
    <property type="molecule type" value="Genomic_DNA"/>
</dbReference>
<dbReference type="RefSeq" id="WP_012557413.1">
    <property type="nucleotide sequence ID" value="NC_011369.1"/>
</dbReference>
<dbReference type="SMR" id="B5ZZA8"/>
<dbReference type="STRING" id="395492.Rleg2_1407"/>
<dbReference type="KEGG" id="rlt:Rleg2_1407"/>
<dbReference type="eggNOG" id="COG3508">
    <property type="taxonomic scope" value="Bacteria"/>
</dbReference>
<dbReference type="HOGENOM" id="CLU_027174_0_0_5"/>
<dbReference type="UniPathway" id="UPA00139">
    <property type="reaction ID" value="UER00339"/>
</dbReference>
<dbReference type="Proteomes" id="UP000008330">
    <property type="component" value="Chromosome"/>
</dbReference>
<dbReference type="GO" id="GO:0005737">
    <property type="term" value="C:cytoplasm"/>
    <property type="evidence" value="ECO:0007669"/>
    <property type="project" value="TreeGrafter"/>
</dbReference>
<dbReference type="GO" id="GO:0004411">
    <property type="term" value="F:homogentisate 1,2-dioxygenase activity"/>
    <property type="evidence" value="ECO:0007669"/>
    <property type="project" value="UniProtKB-UniRule"/>
</dbReference>
<dbReference type="GO" id="GO:0005506">
    <property type="term" value="F:iron ion binding"/>
    <property type="evidence" value="ECO:0007669"/>
    <property type="project" value="UniProtKB-UniRule"/>
</dbReference>
<dbReference type="GO" id="GO:0006559">
    <property type="term" value="P:L-phenylalanine catabolic process"/>
    <property type="evidence" value="ECO:0007669"/>
    <property type="project" value="UniProtKB-UniRule"/>
</dbReference>
<dbReference type="GO" id="GO:0006572">
    <property type="term" value="P:tyrosine catabolic process"/>
    <property type="evidence" value="ECO:0007669"/>
    <property type="project" value="UniProtKB-UniRule"/>
</dbReference>
<dbReference type="CDD" id="cd07000">
    <property type="entry name" value="cupin_HGO_N"/>
    <property type="match status" value="1"/>
</dbReference>
<dbReference type="FunFam" id="2.60.120.10:FF:000053">
    <property type="entry name" value="Homogentisate 1,2-dioxygenase"/>
    <property type="match status" value="1"/>
</dbReference>
<dbReference type="Gene3D" id="2.60.120.10">
    <property type="entry name" value="Jelly Rolls"/>
    <property type="match status" value="1"/>
</dbReference>
<dbReference type="HAMAP" id="MF_00334">
    <property type="entry name" value="Homogentis_dioxygen"/>
    <property type="match status" value="1"/>
</dbReference>
<dbReference type="InterPro" id="IPR046451">
    <property type="entry name" value="HgmA_C"/>
</dbReference>
<dbReference type="InterPro" id="IPR046452">
    <property type="entry name" value="HgmA_N"/>
</dbReference>
<dbReference type="InterPro" id="IPR005708">
    <property type="entry name" value="Homogentis_dOase"/>
</dbReference>
<dbReference type="InterPro" id="IPR022950">
    <property type="entry name" value="Homogentis_dOase_bac"/>
</dbReference>
<dbReference type="InterPro" id="IPR014710">
    <property type="entry name" value="RmlC-like_jellyroll"/>
</dbReference>
<dbReference type="InterPro" id="IPR011051">
    <property type="entry name" value="RmlC_Cupin_sf"/>
</dbReference>
<dbReference type="NCBIfam" id="TIGR01015">
    <property type="entry name" value="hmgA"/>
    <property type="match status" value="1"/>
</dbReference>
<dbReference type="PANTHER" id="PTHR11056">
    <property type="entry name" value="HOMOGENTISATE 1,2-DIOXYGENASE"/>
    <property type="match status" value="1"/>
</dbReference>
<dbReference type="PANTHER" id="PTHR11056:SF0">
    <property type="entry name" value="HOMOGENTISATE 1,2-DIOXYGENASE"/>
    <property type="match status" value="1"/>
</dbReference>
<dbReference type="Pfam" id="PF04209">
    <property type="entry name" value="HgmA_C"/>
    <property type="match status" value="1"/>
</dbReference>
<dbReference type="Pfam" id="PF20510">
    <property type="entry name" value="HgmA_N"/>
    <property type="match status" value="1"/>
</dbReference>
<dbReference type="SUPFAM" id="SSF51182">
    <property type="entry name" value="RmlC-like cupins"/>
    <property type="match status" value="1"/>
</dbReference>
<name>HGD_RHILW</name>
<comment type="function">
    <text evidence="1">Involved in the catabolism of homogentisate (2,5-dihydroxyphenylacetate or 2,5-OH-PhAc), a central intermediate in the degradation of phenylalanine and tyrosine. Catalyzes the oxidative ring cleavage of the aromatic ring of homogentisate to yield maleylacetoacetate.</text>
</comment>
<comment type="catalytic activity">
    <reaction evidence="1">
        <text>homogentisate + O2 = 4-maleylacetoacetate + H(+)</text>
        <dbReference type="Rhea" id="RHEA:15449"/>
        <dbReference type="ChEBI" id="CHEBI:15378"/>
        <dbReference type="ChEBI" id="CHEBI:15379"/>
        <dbReference type="ChEBI" id="CHEBI:16169"/>
        <dbReference type="ChEBI" id="CHEBI:17105"/>
        <dbReference type="EC" id="1.13.11.5"/>
    </reaction>
</comment>
<comment type="cofactor">
    <cofactor evidence="1">
        <name>Fe cation</name>
        <dbReference type="ChEBI" id="CHEBI:24875"/>
    </cofactor>
</comment>
<comment type="pathway">
    <text evidence="1">Amino-acid degradation; L-phenylalanine degradation; acetoacetate and fumarate from L-phenylalanine: step 4/6.</text>
</comment>
<comment type="subunit">
    <text evidence="1">Hexamer; dimer of trimers.</text>
</comment>
<comment type="similarity">
    <text evidence="1">Belongs to the homogentisate dioxygenase family.</text>
</comment>
<proteinExistence type="inferred from homology"/>
<evidence type="ECO:0000255" key="1">
    <source>
        <dbReference type="HAMAP-Rule" id="MF_00334"/>
    </source>
</evidence>
<protein>
    <recommendedName>
        <fullName evidence="1">Homogentisate 1,2-dioxygenase</fullName>
        <shortName evidence="1">HGDO</shortName>
        <ecNumber evidence="1">1.13.11.5</ecNumber>
    </recommendedName>
    <alternativeName>
        <fullName evidence="1">Homogentisate oxygenase</fullName>
    </alternativeName>
    <alternativeName>
        <fullName evidence="1">Homogentisic acid oxidase</fullName>
    </alternativeName>
    <alternativeName>
        <fullName evidence="1">Homogentisicase</fullName>
    </alternativeName>
</protein>
<feature type="chain" id="PRO_1000119849" description="Homogentisate 1,2-dioxygenase">
    <location>
        <begin position="1"/>
        <end position="453"/>
    </location>
</feature>
<feature type="active site" description="Proton acceptor" evidence="1">
    <location>
        <position position="306"/>
    </location>
</feature>
<feature type="binding site" evidence="1">
    <location>
        <position position="349"/>
    </location>
    <ligand>
        <name>Fe cation</name>
        <dbReference type="ChEBI" id="CHEBI:24875"/>
    </ligand>
</feature>
<feature type="binding site" evidence="1">
    <location>
        <position position="355"/>
    </location>
    <ligand>
        <name>Fe cation</name>
        <dbReference type="ChEBI" id="CHEBI:24875"/>
    </ligand>
</feature>
<feature type="binding site" evidence="1">
    <location>
        <position position="364"/>
    </location>
    <ligand>
        <name>homogentisate</name>
        <dbReference type="ChEBI" id="CHEBI:16169"/>
    </ligand>
</feature>
<feature type="binding site" evidence="1">
    <location>
        <position position="385"/>
    </location>
    <ligand>
        <name>Fe cation</name>
        <dbReference type="ChEBI" id="CHEBI:24875"/>
    </ligand>
</feature>
<feature type="binding site" evidence="1">
    <location>
        <position position="385"/>
    </location>
    <ligand>
        <name>homogentisate</name>
        <dbReference type="ChEBI" id="CHEBI:16169"/>
    </ligand>
</feature>
<reference key="1">
    <citation type="journal article" date="2010" name="Stand. Genomic Sci.">
        <title>Complete genome sequence of Rhizobium leguminosarum bv trifolii strain WSM2304, an effective microsymbiont of the South American clover Trifolium polymorphum.</title>
        <authorList>
            <person name="Reeve W."/>
            <person name="O'Hara G."/>
            <person name="Chain P."/>
            <person name="Ardley J."/>
            <person name="Brau L."/>
            <person name="Nandesena K."/>
            <person name="Tiwari R."/>
            <person name="Malfatti S."/>
            <person name="Kiss H."/>
            <person name="Lapidus A."/>
            <person name="Copeland A."/>
            <person name="Nolan M."/>
            <person name="Land M."/>
            <person name="Ivanova N."/>
            <person name="Mavromatis K."/>
            <person name="Markowitz V."/>
            <person name="Kyrpides N."/>
            <person name="Melino V."/>
            <person name="Denton M."/>
            <person name="Yates R."/>
            <person name="Howieson J."/>
        </authorList>
    </citation>
    <scope>NUCLEOTIDE SEQUENCE [LARGE SCALE GENOMIC DNA]</scope>
    <source>
        <strain>WSM2304</strain>
    </source>
</reference>
<gene>
    <name evidence="1" type="primary">hmgA</name>
    <name type="ordered locus">Rleg2_1407</name>
</gene>
<organism>
    <name type="scientific">Rhizobium leguminosarum bv. trifolii (strain WSM2304)</name>
    <dbReference type="NCBI Taxonomy" id="395492"/>
    <lineage>
        <taxon>Bacteria</taxon>
        <taxon>Pseudomonadati</taxon>
        <taxon>Pseudomonadota</taxon>
        <taxon>Alphaproteobacteria</taxon>
        <taxon>Hyphomicrobiales</taxon>
        <taxon>Rhizobiaceae</taxon>
        <taxon>Rhizobium/Agrobacterium group</taxon>
        <taxon>Rhizobium</taxon>
    </lineage>
</organism>